<organism>
    <name type="scientific">Lactobacillus acidophilus (strain ATCC 700396 / NCK56 / N2 / NCFM)</name>
    <dbReference type="NCBI Taxonomy" id="272621"/>
    <lineage>
        <taxon>Bacteria</taxon>
        <taxon>Bacillati</taxon>
        <taxon>Bacillota</taxon>
        <taxon>Bacilli</taxon>
        <taxon>Lactobacillales</taxon>
        <taxon>Lactobacillaceae</taxon>
        <taxon>Lactobacillus</taxon>
    </lineage>
</organism>
<accession>Q5FLX5</accession>
<proteinExistence type="inferred from homology"/>
<dbReference type="EMBL" id="CP000033">
    <property type="protein sequence ID" value="AAV42299.1"/>
    <property type="molecule type" value="Genomic_DNA"/>
</dbReference>
<dbReference type="RefSeq" id="WP_011254144.1">
    <property type="nucleotide sequence ID" value="NC_006814.3"/>
</dbReference>
<dbReference type="RefSeq" id="YP_193330.1">
    <property type="nucleotide sequence ID" value="NC_006814.3"/>
</dbReference>
<dbReference type="SMR" id="Q5FLX5"/>
<dbReference type="STRING" id="272621.LBA0408"/>
<dbReference type="KEGG" id="lac:LBA0408"/>
<dbReference type="PATRIC" id="fig|272621.13.peg.393"/>
<dbReference type="eggNOG" id="COG0249">
    <property type="taxonomic scope" value="Bacteria"/>
</dbReference>
<dbReference type="HOGENOM" id="CLU_002472_1_3_9"/>
<dbReference type="OrthoDB" id="9802448at2"/>
<dbReference type="BioCyc" id="LACI272621:G1G49-402-MONOMER"/>
<dbReference type="Proteomes" id="UP000006381">
    <property type="component" value="Chromosome"/>
</dbReference>
<dbReference type="GO" id="GO:0005829">
    <property type="term" value="C:cytosol"/>
    <property type="evidence" value="ECO:0007669"/>
    <property type="project" value="TreeGrafter"/>
</dbReference>
<dbReference type="GO" id="GO:0005524">
    <property type="term" value="F:ATP binding"/>
    <property type="evidence" value="ECO:0007669"/>
    <property type="project" value="UniProtKB-UniRule"/>
</dbReference>
<dbReference type="GO" id="GO:0140664">
    <property type="term" value="F:ATP-dependent DNA damage sensor activity"/>
    <property type="evidence" value="ECO:0007669"/>
    <property type="project" value="InterPro"/>
</dbReference>
<dbReference type="GO" id="GO:0003684">
    <property type="term" value="F:damaged DNA binding"/>
    <property type="evidence" value="ECO:0007669"/>
    <property type="project" value="UniProtKB-UniRule"/>
</dbReference>
<dbReference type="GO" id="GO:0030983">
    <property type="term" value="F:mismatched DNA binding"/>
    <property type="evidence" value="ECO:0007669"/>
    <property type="project" value="InterPro"/>
</dbReference>
<dbReference type="GO" id="GO:0006298">
    <property type="term" value="P:mismatch repair"/>
    <property type="evidence" value="ECO:0007669"/>
    <property type="project" value="UniProtKB-UniRule"/>
</dbReference>
<dbReference type="CDD" id="cd03284">
    <property type="entry name" value="ABC_MutS1"/>
    <property type="match status" value="1"/>
</dbReference>
<dbReference type="FunFam" id="1.10.1420.10:FF:000001">
    <property type="entry name" value="DNA mismatch repair protein MutS"/>
    <property type="match status" value="1"/>
</dbReference>
<dbReference type="FunFam" id="3.40.1170.10:FF:000001">
    <property type="entry name" value="DNA mismatch repair protein MutS"/>
    <property type="match status" value="1"/>
</dbReference>
<dbReference type="FunFam" id="3.40.50.300:FF:000870">
    <property type="entry name" value="MutS protein homolog 4"/>
    <property type="match status" value="1"/>
</dbReference>
<dbReference type="Gene3D" id="1.10.1420.10">
    <property type="match status" value="2"/>
</dbReference>
<dbReference type="Gene3D" id="3.40.1170.10">
    <property type="entry name" value="DNA repair protein MutS, domain I"/>
    <property type="match status" value="1"/>
</dbReference>
<dbReference type="Gene3D" id="3.30.420.110">
    <property type="entry name" value="MutS, connector domain"/>
    <property type="match status" value="1"/>
</dbReference>
<dbReference type="Gene3D" id="3.40.50.300">
    <property type="entry name" value="P-loop containing nucleotide triphosphate hydrolases"/>
    <property type="match status" value="1"/>
</dbReference>
<dbReference type="HAMAP" id="MF_00096">
    <property type="entry name" value="MutS"/>
    <property type="match status" value="1"/>
</dbReference>
<dbReference type="InterPro" id="IPR005748">
    <property type="entry name" value="DNA_mismatch_repair_MutS"/>
</dbReference>
<dbReference type="InterPro" id="IPR007695">
    <property type="entry name" value="DNA_mismatch_repair_MutS-lik_N"/>
</dbReference>
<dbReference type="InterPro" id="IPR017261">
    <property type="entry name" value="DNA_mismatch_repair_MutS/MSH"/>
</dbReference>
<dbReference type="InterPro" id="IPR000432">
    <property type="entry name" value="DNA_mismatch_repair_MutS_C"/>
</dbReference>
<dbReference type="InterPro" id="IPR007861">
    <property type="entry name" value="DNA_mismatch_repair_MutS_clamp"/>
</dbReference>
<dbReference type="InterPro" id="IPR007696">
    <property type="entry name" value="DNA_mismatch_repair_MutS_core"/>
</dbReference>
<dbReference type="InterPro" id="IPR016151">
    <property type="entry name" value="DNA_mismatch_repair_MutS_N"/>
</dbReference>
<dbReference type="InterPro" id="IPR036187">
    <property type="entry name" value="DNA_mismatch_repair_MutS_sf"/>
</dbReference>
<dbReference type="InterPro" id="IPR007860">
    <property type="entry name" value="DNA_mmatch_repair_MutS_con_dom"/>
</dbReference>
<dbReference type="InterPro" id="IPR045076">
    <property type="entry name" value="MutS"/>
</dbReference>
<dbReference type="InterPro" id="IPR036678">
    <property type="entry name" value="MutS_con_dom_sf"/>
</dbReference>
<dbReference type="InterPro" id="IPR027417">
    <property type="entry name" value="P-loop_NTPase"/>
</dbReference>
<dbReference type="NCBIfam" id="TIGR01070">
    <property type="entry name" value="mutS1"/>
    <property type="match status" value="1"/>
</dbReference>
<dbReference type="NCBIfam" id="NF003810">
    <property type="entry name" value="PRK05399.1"/>
    <property type="match status" value="1"/>
</dbReference>
<dbReference type="PANTHER" id="PTHR11361:SF34">
    <property type="entry name" value="DNA MISMATCH REPAIR PROTEIN MSH1, MITOCHONDRIAL"/>
    <property type="match status" value="1"/>
</dbReference>
<dbReference type="PANTHER" id="PTHR11361">
    <property type="entry name" value="DNA MISMATCH REPAIR PROTEIN MUTS FAMILY MEMBER"/>
    <property type="match status" value="1"/>
</dbReference>
<dbReference type="Pfam" id="PF01624">
    <property type="entry name" value="MutS_I"/>
    <property type="match status" value="1"/>
</dbReference>
<dbReference type="Pfam" id="PF05188">
    <property type="entry name" value="MutS_II"/>
    <property type="match status" value="1"/>
</dbReference>
<dbReference type="Pfam" id="PF05192">
    <property type="entry name" value="MutS_III"/>
    <property type="match status" value="1"/>
</dbReference>
<dbReference type="Pfam" id="PF05190">
    <property type="entry name" value="MutS_IV"/>
    <property type="match status" value="1"/>
</dbReference>
<dbReference type="Pfam" id="PF00488">
    <property type="entry name" value="MutS_V"/>
    <property type="match status" value="1"/>
</dbReference>
<dbReference type="PIRSF" id="PIRSF037677">
    <property type="entry name" value="DNA_mis_repair_Msh6"/>
    <property type="match status" value="1"/>
</dbReference>
<dbReference type="SMART" id="SM00534">
    <property type="entry name" value="MUTSac"/>
    <property type="match status" value="1"/>
</dbReference>
<dbReference type="SMART" id="SM00533">
    <property type="entry name" value="MUTSd"/>
    <property type="match status" value="1"/>
</dbReference>
<dbReference type="SUPFAM" id="SSF55271">
    <property type="entry name" value="DNA repair protein MutS, domain I"/>
    <property type="match status" value="1"/>
</dbReference>
<dbReference type="SUPFAM" id="SSF53150">
    <property type="entry name" value="DNA repair protein MutS, domain II"/>
    <property type="match status" value="1"/>
</dbReference>
<dbReference type="SUPFAM" id="SSF48334">
    <property type="entry name" value="DNA repair protein MutS, domain III"/>
    <property type="match status" value="1"/>
</dbReference>
<dbReference type="SUPFAM" id="SSF52540">
    <property type="entry name" value="P-loop containing nucleoside triphosphate hydrolases"/>
    <property type="match status" value="1"/>
</dbReference>
<dbReference type="PROSITE" id="PS00486">
    <property type="entry name" value="DNA_MISMATCH_REPAIR_2"/>
    <property type="match status" value="1"/>
</dbReference>
<feature type="chain" id="PRO_0000224377" description="DNA mismatch repair protein MutS">
    <location>
        <begin position="1"/>
        <end position="856"/>
    </location>
</feature>
<feature type="binding site" evidence="1">
    <location>
        <begin position="600"/>
        <end position="607"/>
    </location>
    <ligand>
        <name>ATP</name>
        <dbReference type="ChEBI" id="CHEBI:30616"/>
    </ligand>
</feature>
<comment type="function">
    <text evidence="1">This protein is involved in the repair of mismatches in DNA. It is possible that it carries out the mismatch recognition step. This protein has a weak ATPase activity.</text>
</comment>
<comment type="similarity">
    <text evidence="1">Belongs to the DNA mismatch repair MutS family.</text>
</comment>
<name>MUTS_LACAC</name>
<protein>
    <recommendedName>
        <fullName evidence="1">DNA mismatch repair protein MutS</fullName>
    </recommendedName>
</protein>
<reference key="1">
    <citation type="journal article" date="2005" name="Proc. Natl. Acad. Sci. U.S.A.">
        <title>Complete genome sequence of the probiotic lactic acid bacterium Lactobacillus acidophilus NCFM.</title>
        <authorList>
            <person name="Altermann E."/>
            <person name="Russell W.M."/>
            <person name="Azcarate-Peril M.A."/>
            <person name="Barrangou R."/>
            <person name="Buck B.L."/>
            <person name="McAuliffe O."/>
            <person name="Souther N."/>
            <person name="Dobson A."/>
            <person name="Duong T."/>
            <person name="Callanan M."/>
            <person name="Lick S."/>
            <person name="Hamrick A."/>
            <person name="Cano R."/>
            <person name="Klaenhammer T.R."/>
        </authorList>
    </citation>
    <scope>NUCLEOTIDE SEQUENCE [LARGE SCALE GENOMIC DNA]</scope>
    <source>
        <strain>ATCC 700396 / NCK56 / N2 / NCFM</strain>
    </source>
</reference>
<evidence type="ECO:0000255" key="1">
    <source>
        <dbReference type="HAMAP-Rule" id="MF_00096"/>
    </source>
</evidence>
<sequence length="856" mass="95666">MMEQYYEIKKQYPDAFLFYRVGDFYELFEEDAVKGAQILELTLTHRSNKTKNPIPMAGVPHMAVDTYVNTLVEKGYKVALCEQLEDPKKAKGMVKRGIIQLVTPGTMMSEGPNDAKDSNYLTSVVTTEKGFGVAYSDLSTGEVYATHLKSFEAVSNELLSLRTREVVYNGPLTEQNKEFMHKANITVSSPTPIEGEHAEISYVGQNLTNSAEKKATEQLVGYLLSTQKRSLAHLQVAKSYEVNQYLQMSHTVQNNLELVASAKTGKKMGSLFWVLDKTHTAMGGRLLKQWLARPLLNVDEINHREEMVQALFDGYFTRENAIDALKGVYDLERLTGRIAFGNVNARELLQLSRSLEAVPTILDALDQSDSDVLKEFAQKIDPLKGVAELITTTIVKDPPLLTTEGGLIREGVDKQLDRYRDAMNNGKKWLAQMEADERQKTGIENLKVGYNKVFGYYIQVSNGNKNKVPLDRYTRKQTLTNAERYITPELKEHENLILEAQTRSTDLEYDLFVRLREEVKKYIPALQKLGSQLAALDVFCGFASVAEQNNYCRPSFHTDNQDIDVVNGRHPVVEKVMTAGSYIPNSVEMDSSTNIYLITGPNMSGKSTYMRQMALIAIMAQVGSFVPADSADLPIFDQIFTRIGAADDLISGQSTFMVEMSEANDALQYATKRSLVLFDEIGRGTATYDGMALAGAIVKYLHDKVGAKAFFATHYHELTDLDETLDHLKNIHVGATEENGKLIFLHKILPGPADQSYGIHVAQLAGLPKSVLREATKLLKRLEAQGSEIAPASQQLDLFAQPEVNDSEEVQAEQAVITDTEQNILDDISNLYLADKTPLQIMQLVADWQKDLKDDK</sequence>
<gene>
    <name evidence="1" type="primary">mutS</name>
    <name type="ordered locus">LBA0408</name>
</gene>
<keyword id="KW-0067">ATP-binding</keyword>
<keyword id="KW-0227">DNA damage</keyword>
<keyword id="KW-0234">DNA repair</keyword>
<keyword id="KW-0238">DNA-binding</keyword>
<keyword id="KW-0547">Nucleotide-binding</keyword>
<keyword id="KW-1185">Reference proteome</keyword>